<keyword id="KW-0997">Cell inner membrane</keyword>
<keyword id="KW-1003">Cell membrane</keyword>
<keyword id="KW-0143">Chaperone</keyword>
<keyword id="KW-0472">Membrane</keyword>
<keyword id="KW-0653">Protein transport</keyword>
<keyword id="KW-0812">Transmembrane</keyword>
<keyword id="KW-1133">Transmembrane helix</keyword>
<keyword id="KW-0813">Transport</keyword>
<protein>
    <recommendedName>
        <fullName evidence="1">Membrane protein insertase YidC</fullName>
    </recommendedName>
    <alternativeName>
        <fullName evidence="1">Foldase YidC</fullName>
    </alternativeName>
    <alternativeName>
        <fullName evidence="1">Membrane integrase YidC</fullName>
    </alternativeName>
    <alternativeName>
        <fullName evidence="1">Membrane protein YidC</fullName>
    </alternativeName>
</protein>
<gene>
    <name evidence="1" type="primary">yidC</name>
    <name type="ordered locus">EcHS_A3919</name>
</gene>
<sequence>MDSQRNLLVIALLFVSFMIWQAWEQDKNPQPQAQQTTQTTTTAAGSAADQGVPASGQGKLISVKTDVLDLTINTRGGDVEQALLPAYPKELNSTQPFQLLETSPQFIYQAQSGLTGRDGPDNPANGPRPLYNVEKDAYVLAEGQNELQVPMTYTDAAGNTFTKTFVLKRGDYAVNVNYNVQNAGEKPLEISTFGQLKQSITLPPHLDTGSSNFALHTFRGAAYSTPDEKYEKYKFDTIADNENLNISSKGGWVAMLQQYFATAWIPHNDGTNNFYTANLGNGIAAIGYKSQPVLVQPGQTGAMNSTLWVGPEIQDKMAAVAPHLDLTVDYGWLWFISQPLFKLLKWIHSFVGNWGFSIIIITFIVRGIMYPLTKAQYTSMAKMRMLQPKIQAMRERLGDDKQRISQEMMALYKAEKVNPLGGCFPLLIQMPIFLALYYMLMGSVELRQAPFALWIHDLSAQDPYYILPILMGVTMFFIQKMSPTTVTDPMQQKIMTFMPVIFTVFFLWFPSGLVLYYIVSNLVTIIQQQLIYRGLEKRGLHSREKKKS</sequence>
<organism>
    <name type="scientific">Escherichia coli O9:H4 (strain HS)</name>
    <dbReference type="NCBI Taxonomy" id="331112"/>
    <lineage>
        <taxon>Bacteria</taxon>
        <taxon>Pseudomonadati</taxon>
        <taxon>Pseudomonadota</taxon>
        <taxon>Gammaproteobacteria</taxon>
        <taxon>Enterobacterales</taxon>
        <taxon>Enterobacteriaceae</taxon>
        <taxon>Escherichia</taxon>
    </lineage>
</organism>
<reference key="1">
    <citation type="journal article" date="2008" name="J. Bacteriol.">
        <title>The pangenome structure of Escherichia coli: comparative genomic analysis of E. coli commensal and pathogenic isolates.</title>
        <authorList>
            <person name="Rasko D.A."/>
            <person name="Rosovitz M.J."/>
            <person name="Myers G.S.A."/>
            <person name="Mongodin E.F."/>
            <person name="Fricke W.F."/>
            <person name="Gajer P."/>
            <person name="Crabtree J."/>
            <person name="Sebaihia M."/>
            <person name="Thomson N.R."/>
            <person name="Chaudhuri R."/>
            <person name="Henderson I.R."/>
            <person name="Sperandio V."/>
            <person name="Ravel J."/>
        </authorList>
    </citation>
    <scope>NUCLEOTIDE SEQUENCE [LARGE SCALE GENOMIC DNA]</scope>
    <source>
        <strain>HS</strain>
    </source>
</reference>
<dbReference type="EMBL" id="CP000802">
    <property type="protein sequence ID" value="ABV08121.1"/>
    <property type="molecule type" value="Genomic_DNA"/>
</dbReference>
<dbReference type="RefSeq" id="WP_000378258.1">
    <property type="nucleotide sequence ID" value="NC_009800.1"/>
</dbReference>
<dbReference type="SMR" id="A8A6G7"/>
<dbReference type="IntAct" id="A8A6G7">
    <property type="interactions" value="32"/>
</dbReference>
<dbReference type="GeneID" id="93778448"/>
<dbReference type="KEGG" id="ecx:EcHS_A3919"/>
<dbReference type="HOGENOM" id="CLU_016535_3_0_6"/>
<dbReference type="GO" id="GO:0005886">
    <property type="term" value="C:plasma membrane"/>
    <property type="evidence" value="ECO:0007669"/>
    <property type="project" value="UniProtKB-SubCell"/>
</dbReference>
<dbReference type="GO" id="GO:0032977">
    <property type="term" value="F:membrane insertase activity"/>
    <property type="evidence" value="ECO:0007669"/>
    <property type="project" value="InterPro"/>
</dbReference>
<dbReference type="GO" id="GO:0051205">
    <property type="term" value="P:protein insertion into membrane"/>
    <property type="evidence" value="ECO:0007669"/>
    <property type="project" value="TreeGrafter"/>
</dbReference>
<dbReference type="GO" id="GO:0015031">
    <property type="term" value="P:protein transport"/>
    <property type="evidence" value="ECO:0007669"/>
    <property type="project" value="UniProtKB-KW"/>
</dbReference>
<dbReference type="CDD" id="cd20070">
    <property type="entry name" value="5TM_YidC_Alb3"/>
    <property type="match status" value="1"/>
</dbReference>
<dbReference type="CDD" id="cd19961">
    <property type="entry name" value="EcYidC-like_peri"/>
    <property type="match status" value="1"/>
</dbReference>
<dbReference type="FunFam" id="2.70.98.90:FF:000001">
    <property type="entry name" value="Membrane protein insertase YidC"/>
    <property type="match status" value="1"/>
</dbReference>
<dbReference type="Gene3D" id="2.70.98.90">
    <property type="match status" value="1"/>
</dbReference>
<dbReference type="HAMAP" id="MF_01810">
    <property type="entry name" value="YidC_type1"/>
    <property type="match status" value="1"/>
</dbReference>
<dbReference type="InterPro" id="IPR019998">
    <property type="entry name" value="Membr_insert_YidC"/>
</dbReference>
<dbReference type="InterPro" id="IPR028053">
    <property type="entry name" value="Membr_insert_YidC_N"/>
</dbReference>
<dbReference type="InterPro" id="IPR001708">
    <property type="entry name" value="YidC/ALB3/OXA1/COX18"/>
</dbReference>
<dbReference type="InterPro" id="IPR028055">
    <property type="entry name" value="YidC/Oxa/ALB_C"/>
</dbReference>
<dbReference type="InterPro" id="IPR047196">
    <property type="entry name" value="YidC_ALB_C"/>
</dbReference>
<dbReference type="InterPro" id="IPR038221">
    <property type="entry name" value="YidC_periplasmic_sf"/>
</dbReference>
<dbReference type="NCBIfam" id="NF002351">
    <property type="entry name" value="PRK01318.1-1"/>
    <property type="match status" value="1"/>
</dbReference>
<dbReference type="NCBIfam" id="NF002352">
    <property type="entry name" value="PRK01318.1-3"/>
    <property type="match status" value="1"/>
</dbReference>
<dbReference type="NCBIfam" id="NF002353">
    <property type="entry name" value="PRK01318.1-4"/>
    <property type="match status" value="1"/>
</dbReference>
<dbReference type="NCBIfam" id="TIGR03593">
    <property type="entry name" value="yidC_nterm"/>
    <property type="match status" value="1"/>
</dbReference>
<dbReference type="NCBIfam" id="TIGR03592">
    <property type="entry name" value="yidC_oxa1_cterm"/>
    <property type="match status" value="1"/>
</dbReference>
<dbReference type="PANTHER" id="PTHR12428:SF65">
    <property type="entry name" value="CYTOCHROME C OXIDASE ASSEMBLY PROTEIN COX18, MITOCHONDRIAL"/>
    <property type="match status" value="1"/>
</dbReference>
<dbReference type="PANTHER" id="PTHR12428">
    <property type="entry name" value="OXA1"/>
    <property type="match status" value="1"/>
</dbReference>
<dbReference type="Pfam" id="PF02096">
    <property type="entry name" value="60KD_IMP"/>
    <property type="match status" value="1"/>
</dbReference>
<dbReference type="Pfam" id="PF14849">
    <property type="entry name" value="YidC_periplas"/>
    <property type="match status" value="1"/>
</dbReference>
<dbReference type="PRINTS" id="PR00701">
    <property type="entry name" value="60KDINNERMP"/>
</dbReference>
<dbReference type="PRINTS" id="PR01900">
    <property type="entry name" value="YIDCPROTEIN"/>
</dbReference>
<proteinExistence type="inferred from homology"/>
<comment type="function">
    <text evidence="1">Required for the insertion and/or proper folding and/or complex formation of integral membrane proteins into the membrane. Involved in integration of membrane proteins that insert both dependently and independently of the Sec translocase complex, as well as at least some lipoproteins. Aids folding of multispanning membrane proteins.</text>
</comment>
<comment type="subunit">
    <text evidence="1">Interacts with the Sec translocase complex via SecD. Specifically interacts with transmembrane segments of nascent integral membrane proteins during membrane integration.</text>
</comment>
<comment type="subcellular location">
    <subcellularLocation>
        <location evidence="1">Cell inner membrane</location>
        <topology evidence="1">Multi-pass membrane protein</topology>
    </subcellularLocation>
</comment>
<comment type="similarity">
    <text evidence="1">Belongs to the OXA1/ALB3/YidC family. Type 1 subfamily.</text>
</comment>
<name>YIDC_ECOHS</name>
<accession>A8A6G7</accession>
<evidence type="ECO:0000255" key="1">
    <source>
        <dbReference type="HAMAP-Rule" id="MF_01810"/>
    </source>
</evidence>
<evidence type="ECO:0000256" key="2">
    <source>
        <dbReference type="SAM" id="MobiDB-lite"/>
    </source>
</evidence>
<feature type="chain" id="PRO_1000070086" description="Membrane protein insertase YidC">
    <location>
        <begin position="1"/>
        <end position="548"/>
    </location>
</feature>
<feature type="transmembrane region" description="Helical" evidence="1">
    <location>
        <begin position="6"/>
        <end position="26"/>
    </location>
</feature>
<feature type="transmembrane region" description="Helical" evidence="1">
    <location>
        <begin position="350"/>
        <end position="370"/>
    </location>
</feature>
<feature type="transmembrane region" description="Helical" evidence="1">
    <location>
        <begin position="420"/>
        <end position="440"/>
    </location>
</feature>
<feature type="transmembrane region" description="Helical" evidence="1">
    <location>
        <begin position="458"/>
        <end position="478"/>
    </location>
</feature>
<feature type="transmembrane region" description="Helical" evidence="1">
    <location>
        <begin position="499"/>
        <end position="519"/>
    </location>
</feature>
<feature type="region of interest" description="Disordered" evidence="2">
    <location>
        <begin position="28"/>
        <end position="55"/>
    </location>
</feature>
<feature type="compositionally biased region" description="Low complexity" evidence="2">
    <location>
        <begin position="30"/>
        <end position="50"/>
    </location>
</feature>